<accession>P08233</accession>
<dbReference type="EMBL" id="X05675">
    <property type="protein sequence ID" value="CAA29158.1"/>
    <property type="molecule type" value="Genomic_DNA"/>
</dbReference>
<dbReference type="PIR" id="JS0286">
    <property type="entry name" value="TLBP2X"/>
</dbReference>
<dbReference type="SMR" id="P08233"/>
<dbReference type="GO" id="GO:0098024">
    <property type="term" value="C:virus tail, fiber"/>
    <property type="evidence" value="ECO:0007669"/>
    <property type="project" value="UniProtKB-KW"/>
</dbReference>
<dbReference type="GO" id="GO:0098671">
    <property type="term" value="P:adhesion receptor-mediated virion attachment to host cell"/>
    <property type="evidence" value="ECO:0000314"/>
    <property type="project" value="UniProtKB"/>
</dbReference>
<dbReference type="GO" id="GO:0046718">
    <property type="term" value="P:symbiont entry into host cell"/>
    <property type="evidence" value="ECO:0007669"/>
    <property type="project" value="UniProtKB-KW"/>
</dbReference>
<dbReference type="InterPro" id="IPR048291">
    <property type="entry name" value="Gp38_N"/>
</dbReference>
<dbReference type="InterPro" id="IPR007932">
    <property type="entry name" value="Receptor-recog_Gp38"/>
</dbReference>
<dbReference type="Pfam" id="PF05268">
    <property type="entry name" value="GP38"/>
    <property type="match status" value="1"/>
</dbReference>
<dbReference type="Pfam" id="PF21721">
    <property type="entry name" value="Gp38_N"/>
    <property type="match status" value="1"/>
</dbReference>
<gene>
    <name type="primary">38</name>
</gene>
<evidence type="ECO:0000250" key="1">
    <source>
        <dbReference type="UniProtKB" id="M1EBB2"/>
    </source>
</evidence>
<evidence type="ECO:0000269" key="2">
    <source>
    </source>
</evidence>
<evidence type="ECO:0000305" key="3"/>
<organism>
    <name type="scientific">Enterobacteria phage Ox2</name>
    <name type="common">Bacteriophage Ox2</name>
    <dbReference type="NCBI Taxonomy" id="10691"/>
    <lineage>
        <taxon>Viruses</taxon>
        <taxon>Duplodnaviria</taxon>
        <taxon>Heunggongvirae</taxon>
        <taxon>Uroviricota</taxon>
        <taxon>Caudoviricetes</taxon>
        <taxon>Straboviridae</taxon>
        <taxon>Tevenvirinae</taxon>
        <taxon>Tequatrovirus</taxon>
    </lineage>
</organism>
<reference key="1">
    <citation type="journal article" date="1987" name="J. Mol. Biol.">
        <title>Receptor-recognizing proteins of T-even type bacteriophages. Constant and hypervariable regions and an unusual case of evolution.</title>
        <authorList>
            <person name="Montag D."/>
            <person name="Riede I."/>
            <person name="Eschbach M.-L."/>
            <person name="Degen M."/>
            <person name="Henning U."/>
        </authorList>
    </citation>
    <scope>NUCLEOTIDE SEQUENCE [GENOMIC DNA]</scope>
</reference>
<reference key="2">
    <citation type="journal article" date="1991" name="J. Mol. Biol.">
        <title>Single mutations in a gene for a tail fiber component of an Escherichia coli phage can cause an extension from a protein to a carbohydrate as a receptor.</title>
        <authorList>
            <person name="Drexler K."/>
            <person name="Dannull J."/>
            <person name="Hindennach I."/>
            <person name="Mutschler B."/>
            <person name="Henning U."/>
        </authorList>
    </citation>
    <scope>FUNCTION</scope>
</reference>
<protein>
    <recommendedName>
        <fullName evidence="1">Receptor-recognizing protein gp38</fullName>
    </recommendedName>
    <alternativeName>
        <fullName>Gene product 38</fullName>
        <shortName evidence="1">gp38</shortName>
    </alternativeName>
    <alternativeName>
        <fullName evidence="1">Long tail fiber adhesin</fullName>
    </alternativeName>
</protein>
<comment type="function">
    <text evidence="1 2">Receptor binding protein (RBP) that is at the tip of the long tail fibers and serves as the phage recognition site for the attachment host receptor (By similarity). Probably uses the host receptor OmpA (PubMed:1829115).</text>
</comment>
<comment type="subcellular location">
    <subcellularLocation>
        <location evidence="1">Virion</location>
    </subcellularLocation>
    <text evidence="1">Forms the distal tip of the long tail fiber.</text>
</comment>
<comment type="domain">
    <text evidence="1">The N-terminus is involved in binding to the fiber protein p37. The C-terminus contains glycine-rich motifs (GRM) and mediates the host specificity. The glycine-rich motifs assemble into a 3-layered PG(II) sandwich domain.</text>
</comment>
<comment type="miscellaneous">
    <text>This phage use outer membrane protein ompA as a receptor.</text>
</comment>
<comment type="similarity">
    <text evidence="3">Belongs to the receptor-recognizing protein gp38 family.</text>
</comment>
<name>RBP_BPOX2</name>
<proteinExistence type="inferred from homology"/>
<keyword id="KW-0945">Host-virus interaction</keyword>
<keyword id="KW-1161">Viral attachment to host cell</keyword>
<keyword id="KW-1230">Viral tail fiber protein</keyword>
<keyword id="KW-1227">Viral tail protein</keyword>
<keyword id="KW-0946">Virion</keyword>
<keyword id="KW-1160">Virus entry into host cell</keyword>
<sequence length="266" mass="27036">MAVVGVPGWIGSSSVNETGQRWMSQAAGQLRLGVPCWMSQFAGRSREIIHTLGADHNFNGQWFRDRCFEAGSAPIVFNITGDLVSYSKDVPLFFMYGDTPNEYVVLNIHGGVHMWGRGGNGGYTHSGGDGNGTQGGHVIQNDIGGRLRIWNYGVIAAGGGGGGGIAYRPHSGAKWQDIGGGGGRPFGGAGGGRYSGGAASYEGPGGGYDYGNAHSGAGGNAGAAGQNAWSDGGKVLKVGVGGASGHAVFGSSPTWGVVGTIYGPRV</sequence>
<feature type="chain" id="PRO_0000165035" description="Receptor-recognizing protein gp38">
    <location>
        <begin position="1"/>
        <end position="266"/>
    </location>
</feature>
<feature type="short sequence motif" description="GRM 1" evidence="1">
    <location>
        <begin position="116"/>
        <end position="123"/>
    </location>
</feature>
<feature type="short sequence motif" description="GRM 2" evidence="1">
    <location>
        <begin position="126"/>
        <end position="137"/>
    </location>
</feature>
<feature type="short sequence motif" description="GRM 3" evidence="1">
    <location>
        <begin position="157"/>
        <end position="171"/>
    </location>
</feature>
<feature type="short sequence motif" description="GRM 4" evidence="1">
    <location>
        <begin position="174"/>
        <end position="184"/>
    </location>
</feature>
<feature type="short sequence motif" description="GRM 5" evidence="1">
    <location>
        <begin position="187"/>
        <end position="191"/>
    </location>
</feature>
<feature type="short sequence motif" description="GRM 6" evidence="1">
    <location>
        <begin position="194"/>
        <end position="200"/>
    </location>
</feature>
<feature type="short sequence motif" description="GRM 7" evidence="1">
    <location>
        <begin position="202"/>
        <end position="209"/>
    </location>
</feature>
<feature type="short sequence motif" description="GRM 8" evidence="1">
    <location>
        <begin position="214"/>
        <end position="220"/>
    </location>
</feature>
<feature type="short sequence motif" description="GRM 9" evidence="1">
    <location>
        <begin position="223"/>
        <end position="228"/>
    </location>
</feature>
<feature type="short sequence motif" description="GRM 10" evidence="1">
    <location>
        <begin position="232"/>
        <end position="246"/>
    </location>
</feature>
<feature type="site" description="Interaction with the fiber protein p37" evidence="1">
    <location>
        <position position="9"/>
    </location>
</feature>
<feature type="site" description="Interaction with the fiber protein p37" evidence="1">
    <location>
        <position position="22"/>
    </location>
</feature>
<feature type="site" description="Interaction with the fiber protein p37" evidence="1">
    <location>
        <position position="37"/>
    </location>
</feature>
<organismHost>
    <name type="scientific">Escherichia coli</name>
    <dbReference type="NCBI Taxonomy" id="562"/>
</organismHost>